<dbReference type="EC" id="2.1.1.166" evidence="1"/>
<dbReference type="EMBL" id="CP000124">
    <property type="protein sequence ID" value="ABA47809.1"/>
    <property type="status" value="ALT_INIT"/>
    <property type="molecule type" value="Genomic_DNA"/>
</dbReference>
<dbReference type="RefSeq" id="WP_004193119.1">
    <property type="nucleotide sequence ID" value="NC_007434.1"/>
</dbReference>
<dbReference type="SMR" id="Q3JTT5"/>
<dbReference type="EnsemblBacteria" id="ABA47809">
    <property type="protein sequence ID" value="ABA47809"/>
    <property type="gene ID" value="BURPS1710b_1614"/>
</dbReference>
<dbReference type="KEGG" id="bpm:BURPS1710b_1614"/>
<dbReference type="HOGENOM" id="CLU_009422_4_1_4"/>
<dbReference type="Proteomes" id="UP000002700">
    <property type="component" value="Chromosome I"/>
</dbReference>
<dbReference type="GO" id="GO:0005737">
    <property type="term" value="C:cytoplasm"/>
    <property type="evidence" value="ECO:0007669"/>
    <property type="project" value="UniProtKB-SubCell"/>
</dbReference>
<dbReference type="GO" id="GO:0008650">
    <property type="term" value="F:rRNA (uridine-2'-O-)-methyltransferase activity"/>
    <property type="evidence" value="ECO:0007669"/>
    <property type="project" value="UniProtKB-UniRule"/>
</dbReference>
<dbReference type="FunFam" id="3.40.50.150:FF:000005">
    <property type="entry name" value="Ribosomal RNA large subunit methyltransferase E"/>
    <property type="match status" value="1"/>
</dbReference>
<dbReference type="Gene3D" id="3.40.50.150">
    <property type="entry name" value="Vaccinia Virus protein VP39"/>
    <property type="match status" value="1"/>
</dbReference>
<dbReference type="HAMAP" id="MF_01547">
    <property type="entry name" value="RNA_methyltr_E"/>
    <property type="match status" value="1"/>
</dbReference>
<dbReference type="InterPro" id="IPR050082">
    <property type="entry name" value="RNA_methyltr_RlmE"/>
</dbReference>
<dbReference type="InterPro" id="IPR002877">
    <property type="entry name" value="RNA_MeTrfase_FtsJ_dom"/>
</dbReference>
<dbReference type="InterPro" id="IPR015507">
    <property type="entry name" value="rRNA-MeTfrase_E"/>
</dbReference>
<dbReference type="InterPro" id="IPR029063">
    <property type="entry name" value="SAM-dependent_MTases_sf"/>
</dbReference>
<dbReference type="PANTHER" id="PTHR10920">
    <property type="entry name" value="RIBOSOMAL RNA METHYLTRANSFERASE"/>
    <property type="match status" value="1"/>
</dbReference>
<dbReference type="PANTHER" id="PTHR10920:SF18">
    <property type="entry name" value="RRNA METHYLTRANSFERASE 2, MITOCHONDRIAL"/>
    <property type="match status" value="1"/>
</dbReference>
<dbReference type="Pfam" id="PF01728">
    <property type="entry name" value="FtsJ"/>
    <property type="match status" value="1"/>
</dbReference>
<dbReference type="PIRSF" id="PIRSF005461">
    <property type="entry name" value="23S_rRNA_mtase"/>
    <property type="match status" value="1"/>
</dbReference>
<dbReference type="SUPFAM" id="SSF53335">
    <property type="entry name" value="S-adenosyl-L-methionine-dependent methyltransferases"/>
    <property type="match status" value="1"/>
</dbReference>
<sequence length="220" mass="24660">MAKNRFNQSWLHDHINDPYVKMAQREGYRARAAYKLKEIDEQDKLIRPGQVIVDLGAAPGSWSQYARNKLAQGKRRDAVREGGIDGTIIALDMLPMEPVADVHFIQGDFREESVLHQLEEVLAGRAVDLVISDMAPNLSGVAVADAARIEHVCDLALEFAQNHLKPDGALLVKCFHGSGYSQIVEKFKHQFKTVAPRKPKASRDKSSETFILGRHLKQPR</sequence>
<evidence type="ECO:0000255" key="1">
    <source>
        <dbReference type="HAMAP-Rule" id="MF_01547"/>
    </source>
</evidence>
<evidence type="ECO:0000256" key="2">
    <source>
        <dbReference type="SAM" id="MobiDB-lite"/>
    </source>
</evidence>
<evidence type="ECO:0000305" key="3"/>
<protein>
    <recommendedName>
        <fullName evidence="1">Ribosomal RNA large subunit methyltransferase E</fullName>
        <ecNumber evidence="1">2.1.1.166</ecNumber>
    </recommendedName>
    <alternativeName>
        <fullName evidence="1">23S rRNA Um2552 methyltransferase</fullName>
    </alternativeName>
    <alternativeName>
        <fullName evidence="1">rRNA (uridine-2'-O-)-methyltransferase</fullName>
    </alternativeName>
</protein>
<accession>Q3JTT5</accession>
<proteinExistence type="inferred from homology"/>
<name>RLME_BURP1</name>
<reference key="1">
    <citation type="journal article" date="2010" name="Genome Biol. Evol.">
        <title>Continuing evolution of Burkholderia mallei through genome reduction and large-scale rearrangements.</title>
        <authorList>
            <person name="Losada L."/>
            <person name="Ronning C.M."/>
            <person name="DeShazer D."/>
            <person name="Woods D."/>
            <person name="Fedorova N."/>
            <person name="Kim H.S."/>
            <person name="Shabalina S.A."/>
            <person name="Pearson T.R."/>
            <person name="Brinkac L."/>
            <person name="Tan P."/>
            <person name="Nandi T."/>
            <person name="Crabtree J."/>
            <person name="Badger J."/>
            <person name="Beckstrom-Sternberg S."/>
            <person name="Saqib M."/>
            <person name="Schutzer S.E."/>
            <person name="Keim P."/>
            <person name="Nierman W.C."/>
        </authorList>
    </citation>
    <scope>NUCLEOTIDE SEQUENCE [LARGE SCALE GENOMIC DNA]</scope>
    <source>
        <strain>1710b</strain>
    </source>
</reference>
<feature type="chain" id="PRO_0000282735" description="Ribosomal RNA large subunit methyltransferase E">
    <location>
        <begin position="1"/>
        <end position="220"/>
    </location>
</feature>
<feature type="region of interest" description="Disordered" evidence="2">
    <location>
        <begin position="195"/>
        <end position="220"/>
    </location>
</feature>
<feature type="active site" description="Proton acceptor" evidence="1">
    <location>
        <position position="173"/>
    </location>
</feature>
<feature type="binding site" evidence="1">
    <location>
        <position position="60"/>
    </location>
    <ligand>
        <name>S-adenosyl-L-methionine</name>
        <dbReference type="ChEBI" id="CHEBI:59789"/>
    </ligand>
</feature>
<feature type="binding site" evidence="1">
    <location>
        <position position="62"/>
    </location>
    <ligand>
        <name>S-adenosyl-L-methionine</name>
        <dbReference type="ChEBI" id="CHEBI:59789"/>
    </ligand>
</feature>
<feature type="binding site" evidence="1">
    <location>
        <position position="92"/>
    </location>
    <ligand>
        <name>S-adenosyl-L-methionine</name>
        <dbReference type="ChEBI" id="CHEBI:59789"/>
    </ligand>
</feature>
<feature type="binding site" evidence="1">
    <location>
        <position position="108"/>
    </location>
    <ligand>
        <name>S-adenosyl-L-methionine</name>
        <dbReference type="ChEBI" id="CHEBI:59789"/>
    </ligand>
</feature>
<feature type="binding site" evidence="1">
    <location>
        <position position="133"/>
    </location>
    <ligand>
        <name>S-adenosyl-L-methionine</name>
        <dbReference type="ChEBI" id="CHEBI:59789"/>
    </ligand>
</feature>
<keyword id="KW-0963">Cytoplasm</keyword>
<keyword id="KW-0489">Methyltransferase</keyword>
<keyword id="KW-0698">rRNA processing</keyword>
<keyword id="KW-0949">S-adenosyl-L-methionine</keyword>
<keyword id="KW-0808">Transferase</keyword>
<comment type="function">
    <text evidence="1">Specifically methylates the uridine in position 2552 of 23S rRNA at the 2'-O position of the ribose in the fully assembled 50S ribosomal subunit.</text>
</comment>
<comment type="catalytic activity">
    <reaction evidence="1">
        <text>uridine(2552) in 23S rRNA + S-adenosyl-L-methionine = 2'-O-methyluridine(2552) in 23S rRNA + S-adenosyl-L-homocysteine + H(+)</text>
        <dbReference type="Rhea" id="RHEA:42720"/>
        <dbReference type="Rhea" id="RHEA-COMP:10202"/>
        <dbReference type="Rhea" id="RHEA-COMP:10203"/>
        <dbReference type="ChEBI" id="CHEBI:15378"/>
        <dbReference type="ChEBI" id="CHEBI:57856"/>
        <dbReference type="ChEBI" id="CHEBI:59789"/>
        <dbReference type="ChEBI" id="CHEBI:65315"/>
        <dbReference type="ChEBI" id="CHEBI:74478"/>
        <dbReference type="EC" id="2.1.1.166"/>
    </reaction>
</comment>
<comment type="subcellular location">
    <subcellularLocation>
        <location evidence="1">Cytoplasm</location>
    </subcellularLocation>
</comment>
<comment type="similarity">
    <text evidence="1">Belongs to the class I-like SAM-binding methyltransferase superfamily. RNA methyltransferase RlmE family.</text>
</comment>
<comment type="sequence caution" evidence="3">
    <conflict type="erroneous initiation">
        <sequence resource="EMBL-CDS" id="ABA47809"/>
    </conflict>
</comment>
<gene>
    <name evidence="1" type="primary">rlmE</name>
    <name evidence="1" type="synonym">ftsJ</name>
    <name evidence="1" type="synonym">rrmJ</name>
    <name type="ordered locus">BURPS1710b_1614</name>
</gene>
<organism>
    <name type="scientific">Burkholderia pseudomallei (strain 1710b)</name>
    <dbReference type="NCBI Taxonomy" id="320372"/>
    <lineage>
        <taxon>Bacteria</taxon>
        <taxon>Pseudomonadati</taxon>
        <taxon>Pseudomonadota</taxon>
        <taxon>Betaproteobacteria</taxon>
        <taxon>Burkholderiales</taxon>
        <taxon>Burkholderiaceae</taxon>
        <taxon>Burkholderia</taxon>
        <taxon>pseudomallei group</taxon>
    </lineage>
</organism>